<comment type="function">
    <text evidence="1 3">Dermonecrotic toxins cleave the phosphodiester linkage between the phosphate and headgroup of certain phospholipids (sphingolipid and lysolipid substrates), forming an alcohol (often choline) and a cyclic phosphate (By similarity). This toxin acts on sphingomyelin (SM) (By similarity). It may also act on ceramide phosphoethanolamine (CPE), lysophosphatidylcholine (LPC) and lysophosphatidylethanolamine (LPE), but not on lysophosphatidylserine (LPS), and lysophosphatidylglycerol (LPG) (By similarity). It acts by transphosphatidylation, releasing exclusively cyclic phosphate products as second products (By similarity). Induces dermonecrosis, hemolysis, increased vascular permeability, edema, inflammatory response, and platelet aggregation (By similarity).</text>
</comment>
<comment type="catalytic activity">
    <reaction evidence="1">
        <text>an N-(acyl)-sphingosylphosphocholine = an N-(acyl)-sphingosyl-1,3-cyclic phosphate + choline</text>
        <dbReference type="Rhea" id="RHEA:60652"/>
        <dbReference type="ChEBI" id="CHEBI:15354"/>
        <dbReference type="ChEBI" id="CHEBI:64583"/>
        <dbReference type="ChEBI" id="CHEBI:143892"/>
    </reaction>
</comment>
<comment type="catalytic activity">
    <reaction evidence="1">
        <text>an N-(acyl)-sphingosylphosphoethanolamine = an N-(acyl)-sphingosyl-1,3-cyclic phosphate + ethanolamine</text>
        <dbReference type="Rhea" id="RHEA:60648"/>
        <dbReference type="ChEBI" id="CHEBI:57603"/>
        <dbReference type="ChEBI" id="CHEBI:143891"/>
        <dbReference type="ChEBI" id="CHEBI:143892"/>
    </reaction>
</comment>
<comment type="catalytic activity">
    <reaction evidence="1">
        <text>a 1-acyl-sn-glycero-3-phosphocholine = a 1-acyl-sn-glycero-2,3-cyclic phosphate + choline</text>
        <dbReference type="Rhea" id="RHEA:60700"/>
        <dbReference type="ChEBI" id="CHEBI:15354"/>
        <dbReference type="ChEBI" id="CHEBI:58168"/>
        <dbReference type="ChEBI" id="CHEBI:143947"/>
    </reaction>
</comment>
<comment type="catalytic activity">
    <reaction evidence="1">
        <text>a 1-acyl-sn-glycero-3-phosphoethanolamine = a 1-acyl-sn-glycero-2,3-cyclic phosphate + ethanolamine</text>
        <dbReference type="Rhea" id="RHEA:60704"/>
        <dbReference type="ChEBI" id="CHEBI:57603"/>
        <dbReference type="ChEBI" id="CHEBI:64381"/>
        <dbReference type="ChEBI" id="CHEBI:143947"/>
    </reaction>
</comment>
<comment type="cofactor">
    <cofactor evidence="5">
        <name>Mg(2+)</name>
        <dbReference type="ChEBI" id="CHEBI:18420"/>
    </cofactor>
    <text evidence="5">Binds 1 Mg(2+) ion per subunit.</text>
</comment>
<comment type="subcellular location">
    <subcellularLocation>
        <location evidence="8">Secreted</location>
    </subcellularLocation>
</comment>
<comment type="tissue specificity">
    <text evidence="8">Expressed by the venom gland.</text>
</comment>
<comment type="similarity">
    <text evidence="7">Belongs to the arthropod phospholipase D family. Class II subfamily.</text>
</comment>
<comment type="caution">
    <text evidence="1 2 4">The most common activity assay for dermonecrotic toxins detects enzymatic activity by monitoring choline release from substrate. Liberation of choline from sphingomyelin (SM) or lysophosphatidylcholine (LPC) is commonly assumed to result from substrate hydrolysis, giving either ceramide-1-phosphate (C1P) or lysophosphatidic acid (LPA), respectively, as a second product. However, two studies from Lajoie and colleagues (2013 and 2015) report the observation of exclusive formation of cyclic phosphate products as second products, resulting from intramolecular transphosphatidylation. Cyclic phosphates have vastly different biological properties from their monoester counterparts, and they may be relevant to the pathology of brown spider envenomation.</text>
</comment>
<keyword id="KW-0204">Cytolysis</keyword>
<keyword id="KW-1061">Dermonecrotic toxin</keyword>
<keyword id="KW-1015">Disulfide bond</keyword>
<keyword id="KW-0354">Hemolysis</keyword>
<keyword id="KW-0442">Lipid degradation</keyword>
<keyword id="KW-0443">Lipid metabolism</keyword>
<keyword id="KW-0456">Lyase</keyword>
<keyword id="KW-0460">Magnesium</keyword>
<keyword id="KW-0479">Metal-binding</keyword>
<keyword id="KW-0964">Secreted</keyword>
<keyword id="KW-0800">Toxin</keyword>
<sequence>EMVDYYVGIGANGLEMDVSFDSNGKAEYTYHGVPCDCFRSCTRSEKFSVYLDYVRQITTPGNPKFRENLIFLIMDLKLNDLEPHALYNAGIDIADQLSKNYWKDDGKARAHFLISIPYVSQTAFVDGFRWWFEKKGLEKYYEKIGWDFSANEDLNSIQATYQKLNITGHTWQSDGITNCLTRGTERLTQAIQKRDTPGNSYLNKVYAWSLDKYGSIKQALDLGVDGVMSNYPQRMVEILSEGTYLERFRLATYEDNPWETFKQ</sequence>
<proteinExistence type="evidence at transcript level"/>
<organism>
    <name type="scientific">Sicarius patagonicus</name>
    <name type="common">Six-eyed sand spider</name>
    <dbReference type="NCBI Taxonomy" id="571540"/>
    <lineage>
        <taxon>Eukaryota</taxon>
        <taxon>Metazoa</taxon>
        <taxon>Ecdysozoa</taxon>
        <taxon>Arthropoda</taxon>
        <taxon>Chelicerata</taxon>
        <taxon>Arachnida</taxon>
        <taxon>Araneae</taxon>
        <taxon>Araneomorphae</taxon>
        <taxon>Haplogynae</taxon>
        <taxon>Scytodoidea</taxon>
        <taxon>Sicariidae</taxon>
        <taxon>Sicarius</taxon>
    </lineage>
</organism>
<reference key="1">
    <citation type="journal article" date="2009" name="Mol. Biol. Evol.">
        <title>Molecular evolution, functional variation, and proposed nomenclature of the gene family that includes sphingomyelinase D in sicariid spider venoms.</title>
        <authorList>
            <person name="Binford G.J."/>
            <person name="Bodner M.R."/>
            <person name="Cordes M.H."/>
            <person name="Baldwin K.L."/>
            <person name="Rynerson M.R."/>
            <person name="Burns S.N."/>
            <person name="Zobel-Thropp P.A."/>
        </authorList>
    </citation>
    <scope>NUCLEOTIDE SEQUENCE [MRNA]</scope>
    <scope>NOMENCLATURE</scope>
    <source>
        <tissue>Venom gland</tissue>
    </source>
</reference>
<evidence type="ECO:0000250" key="1">
    <source>
        <dbReference type="UniProtKB" id="A0A0D4WTV1"/>
    </source>
</evidence>
<evidence type="ECO:0000250" key="2">
    <source>
        <dbReference type="UniProtKB" id="A0A0D4WV12"/>
    </source>
</evidence>
<evidence type="ECO:0000250" key="3">
    <source>
        <dbReference type="UniProtKB" id="P0CE80"/>
    </source>
</evidence>
<evidence type="ECO:0000250" key="4">
    <source>
        <dbReference type="UniProtKB" id="Q4ZFU2"/>
    </source>
</evidence>
<evidence type="ECO:0000250" key="5">
    <source>
        <dbReference type="UniProtKB" id="Q8I914"/>
    </source>
</evidence>
<evidence type="ECO:0000303" key="6">
    <source>
    </source>
</evidence>
<evidence type="ECO:0000305" key="7"/>
<evidence type="ECO:0000305" key="8">
    <source>
    </source>
</evidence>
<protein>
    <recommendedName>
        <fullName evidence="6">Dermonecrotic toxin SpaSicTox-betaIF1</fullName>
        <ecNumber evidence="4">4.6.1.-</ecNumber>
    </recommendedName>
    <alternativeName>
        <fullName>Phospholipase D</fullName>
        <shortName>PLD</shortName>
    </alternativeName>
    <alternativeName>
        <fullName>Sphingomyelin phosphodiesterase D</fullName>
        <shortName>SMD</shortName>
        <shortName>SMase D</shortName>
        <shortName>Sphingomyelinase D</shortName>
    </alternativeName>
</protein>
<dbReference type="EC" id="4.6.1.-" evidence="4"/>
<dbReference type="EMBL" id="FJ171487">
    <property type="protein sequence ID" value="ACN48983.1"/>
    <property type="molecule type" value="mRNA"/>
</dbReference>
<dbReference type="SMR" id="C0JB52"/>
<dbReference type="GO" id="GO:0005576">
    <property type="term" value="C:extracellular region"/>
    <property type="evidence" value="ECO:0007669"/>
    <property type="project" value="UniProtKB-SubCell"/>
</dbReference>
<dbReference type="GO" id="GO:0016829">
    <property type="term" value="F:lyase activity"/>
    <property type="evidence" value="ECO:0007669"/>
    <property type="project" value="UniProtKB-KW"/>
</dbReference>
<dbReference type="GO" id="GO:0046872">
    <property type="term" value="F:metal ion binding"/>
    <property type="evidence" value="ECO:0007669"/>
    <property type="project" value="UniProtKB-KW"/>
</dbReference>
<dbReference type="GO" id="GO:0008081">
    <property type="term" value="F:phosphoric diester hydrolase activity"/>
    <property type="evidence" value="ECO:0007669"/>
    <property type="project" value="InterPro"/>
</dbReference>
<dbReference type="GO" id="GO:0090729">
    <property type="term" value="F:toxin activity"/>
    <property type="evidence" value="ECO:0007669"/>
    <property type="project" value="UniProtKB-KW"/>
</dbReference>
<dbReference type="GO" id="GO:0031640">
    <property type="term" value="P:killing of cells of another organism"/>
    <property type="evidence" value="ECO:0007669"/>
    <property type="project" value="UniProtKB-KW"/>
</dbReference>
<dbReference type="GO" id="GO:0016042">
    <property type="term" value="P:lipid catabolic process"/>
    <property type="evidence" value="ECO:0007669"/>
    <property type="project" value="UniProtKB-KW"/>
</dbReference>
<dbReference type="CDD" id="cd08576">
    <property type="entry name" value="GDPD_like_SMaseD_PLD"/>
    <property type="match status" value="1"/>
</dbReference>
<dbReference type="Gene3D" id="3.20.20.190">
    <property type="entry name" value="Phosphatidylinositol (PI) phosphodiesterase"/>
    <property type="match status" value="1"/>
</dbReference>
<dbReference type="InterPro" id="IPR017946">
    <property type="entry name" value="PLC-like_Pdiesterase_TIM-brl"/>
</dbReference>
<dbReference type="SUPFAM" id="SSF51695">
    <property type="entry name" value="PLC-like phosphodiesterases"/>
    <property type="match status" value="1"/>
</dbReference>
<feature type="chain" id="PRO_0000392868" description="Dermonecrotic toxin SpaSicTox-betaIF1">
    <location>
        <begin position="1" status="less than"/>
        <end position="263"/>
    </location>
</feature>
<feature type="active site" description="Nucleophile" evidence="5">
    <location>
        <position position="31"/>
    </location>
</feature>
<feature type="binding site" evidence="5">
    <location>
        <position position="15"/>
    </location>
    <ligand>
        <name>Mg(2+)</name>
        <dbReference type="ChEBI" id="CHEBI:18420"/>
    </ligand>
</feature>
<feature type="binding site" evidence="5">
    <location>
        <position position="17"/>
    </location>
    <ligand>
        <name>Mg(2+)</name>
        <dbReference type="ChEBI" id="CHEBI:18420"/>
    </ligand>
</feature>
<feature type="binding site" evidence="5">
    <location>
        <position position="75"/>
    </location>
    <ligand>
        <name>Mg(2+)</name>
        <dbReference type="ChEBI" id="CHEBI:18420"/>
    </ligand>
</feature>
<feature type="disulfide bond" evidence="3">
    <location>
        <begin position="35"/>
        <end position="41"/>
    </location>
</feature>
<feature type="disulfide bond" evidence="3">
    <location>
        <begin position="37"/>
        <end position="179"/>
    </location>
</feature>
<feature type="non-terminal residue">
    <location>
        <position position="1"/>
    </location>
</feature>
<accession>C0JB52</accession>
<name>B1V_SICPA</name>